<reference key="1">
    <citation type="journal article" date="2005" name="Nucleic Acids Res.">
        <title>The genome sequence of Salmonella enterica serovar Choleraesuis, a highly invasive and resistant zoonotic pathogen.</title>
        <authorList>
            <person name="Chiu C.-H."/>
            <person name="Tang P."/>
            <person name="Chu C."/>
            <person name="Hu S."/>
            <person name="Bao Q."/>
            <person name="Yu J."/>
            <person name="Chou Y.-Y."/>
            <person name="Wang H.-S."/>
            <person name="Lee Y.-S."/>
        </authorList>
    </citation>
    <scope>NUCLEOTIDE SEQUENCE [LARGE SCALE GENOMIC DNA]</scope>
    <source>
        <strain>SC-B67</strain>
    </source>
</reference>
<comment type="function">
    <text evidence="1">Involved in unsaturated fatty acids biosynthesis. Catalyzes the dehydration of short chain beta-hydroxyacyl-ACPs and long chain saturated and unsaturated beta-hydroxyacyl-ACPs.</text>
</comment>
<comment type="catalytic activity">
    <reaction evidence="1">
        <text>a (3R)-hydroxyacyl-[ACP] = a (2E)-enoyl-[ACP] + H2O</text>
        <dbReference type="Rhea" id="RHEA:13097"/>
        <dbReference type="Rhea" id="RHEA-COMP:9925"/>
        <dbReference type="Rhea" id="RHEA-COMP:9945"/>
        <dbReference type="ChEBI" id="CHEBI:15377"/>
        <dbReference type="ChEBI" id="CHEBI:78784"/>
        <dbReference type="ChEBI" id="CHEBI:78827"/>
        <dbReference type="EC" id="4.2.1.59"/>
    </reaction>
</comment>
<comment type="subcellular location">
    <subcellularLocation>
        <location evidence="1">Cytoplasm</location>
    </subcellularLocation>
</comment>
<comment type="similarity">
    <text evidence="1">Belongs to the thioester dehydratase family. FabZ subfamily.</text>
</comment>
<comment type="sequence caution" evidence="2">
    <conflict type="erroneous initiation">
        <sequence resource="EMBL-CDS" id="AAX64133"/>
    </conflict>
</comment>
<gene>
    <name evidence="1" type="primary">fabZ</name>
    <name type="ordered locus">SCH_0227</name>
</gene>
<accession>Q57T28</accession>
<keyword id="KW-0963">Cytoplasm</keyword>
<keyword id="KW-0441">Lipid A biosynthesis</keyword>
<keyword id="KW-0444">Lipid biosynthesis</keyword>
<keyword id="KW-0443">Lipid metabolism</keyword>
<keyword id="KW-0456">Lyase</keyword>
<name>FABZ_SALCH</name>
<feature type="chain" id="PRO_0000230834" description="3-hydroxyacyl-[acyl-carrier-protein] dehydratase FabZ">
    <location>
        <begin position="1"/>
        <end position="151"/>
    </location>
</feature>
<feature type="active site" evidence="1">
    <location>
        <position position="54"/>
    </location>
</feature>
<organism>
    <name type="scientific">Salmonella choleraesuis (strain SC-B67)</name>
    <dbReference type="NCBI Taxonomy" id="321314"/>
    <lineage>
        <taxon>Bacteria</taxon>
        <taxon>Pseudomonadati</taxon>
        <taxon>Pseudomonadota</taxon>
        <taxon>Gammaproteobacteria</taxon>
        <taxon>Enterobacterales</taxon>
        <taxon>Enterobacteriaceae</taxon>
        <taxon>Salmonella</taxon>
    </lineage>
</organism>
<sequence length="151" mass="16999">MTTNTHTLQIEEILELLPHRFPFLLVDRVLDFEEGRFLRAVKNVSVNEPFFQGHFPGKPILPGVLILEAMAQATGILAFKSVGKLEPGELYYFAGIDEARFKRPVVPGDQMIMEVTFEKTRRGLTRFKGVALVDGKVVCEATMMCARSREA</sequence>
<dbReference type="EC" id="4.2.1.59" evidence="1"/>
<dbReference type="EMBL" id="AE017220">
    <property type="protein sequence ID" value="AAX64133.1"/>
    <property type="status" value="ALT_INIT"/>
    <property type="molecule type" value="Genomic_DNA"/>
</dbReference>
<dbReference type="RefSeq" id="WP_000210741.1">
    <property type="nucleotide sequence ID" value="NC_006905.1"/>
</dbReference>
<dbReference type="SMR" id="Q57T28"/>
<dbReference type="GeneID" id="66754751"/>
<dbReference type="KEGG" id="sec:SCH_0227"/>
<dbReference type="HOGENOM" id="CLU_078912_1_0_6"/>
<dbReference type="Proteomes" id="UP000000538">
    <property type="component" value="Chromosome"/>
</dbReference>
<dbReference type="GO" id="GO:0005737">
    <property type="term" value="C:cytoplasm"/>
    <property type="evidence" value="ECO:0007669"/>
    <property type="project" value="UniProtKB-SubCell"/>
</dbReference>
<dbReference type="GO" id="GO:0016020">
    <property type="term" value="C:membrane"/>
    <property type="evidence" value="ECO:0007669"/>
    <property type="project" value="GOC"/>
</dbReference>
<dbReference type="GO" id="GO:0019171">
    <property type="term" value="F:(3R)-hydroxyacyl-[acyl-carrier-protein] dehydratase activity"/>
    <property type="evidence" value="ECO:0007669"/>
    <property type="project" value="UniProtKB-EC"/>
</dbReference>
<dbReference type="GO" id="GO:0006633">
    <property type="term" value="P:fatty acid biosynthetic process"/>
    <property type="evidence" value="ECO:0007669"/>
    <property type="project" value="UniProtKB-UniRule"/>
</dbReference>
<dbReference type="GO" id="GO:0009245">
    <property type="term" value="P:lipid A biosynthetic process"/>
    <property type="evidence" value="ECO:0007669"/>
    <property type="project" value="UniProtKB-UniRule"/>
</dbReference>
<dbReference type="CDD" id="cd01288">
    <property type="entry name" value="FabZ"/>
    <property type="match status" value="1"/>
</dbReference>
<dbReference type="FunFam" id="3.10.129.10:FF:000001">
    <property type="entry name" value="3-hydroxyacyl-[acyl-carrier-protein] dehydratase FabZ"/>
    <property type="match status" value="1"/>
</dbReference>
<dbReference type="Gene3D" id="3.10.129.10">
    <property type="entry name" value="Hotdog Thioesterase"/>
    <property type="match status" value="1"/>
</dbReference>
<dbReference type="HAMAP" id="MF_00406">
    <property type="entry name" value="FabZ"/>
    <property type="match status" value="1"/>
</dbReference>
<dbReference type="InterPro" id="IPR013114">
    <property type="entry name" value="FabA_FabZ"/>
</dbReference>
<dbReference type="InterPro" id="IPR010084">
    <property type="entry name" value="FabZ"/>
</dbReference>
<dbReference type="InterPro" id="IPR029069">
    <property type="entry name" value="HotDog_dom_sf"/>
</dbReference>
<dbReference type="NCBIfam" id="TIGR01750">
    <property type="entry name" value="fabZ"/>
    <property type="match status" value="1"/>
</dbReference>
<dbReference type="NCBIfam" id="NF000582">
    <property type="entry name" value="PRK00006.1"/>
    <property type="match status" value="1"/>
</dbReference>
<dbReference type="PANTHER" id="PTHR30272">
    <property type="entry name" value="3-HYDROXYACYL-[ACYL-CARRIER-PROTEIN] DEHYDRATASE"/>
    <property type="match status" value="1"/>
</dbReference>
<dbReference type="PANTHER" id="PTHR30272:SF1">
    <property type="entry name" value="3-HYDROXYACYL-[ACYL-CARRIER-PROTEIN] DEHYDRATASE"/>
    <property type="match status" value="1"/>
</dbReference>
<dbReference type="Pfam" id="PF07977">
    <property type="entry name" value="FabA"/>
    <property type="match status" value="1"/>
</dbReference>
<dbReference type="SUPFAM" id="SSF54637">
    <property type="entry name" value="Thioesterase/thiol ester dehydrase-isomerase"/>
    <property type="match status" value="1"/>
</dbReference>
<evidence type="ECO:0000255" key="1">
    <source>
        <dbReference type="HAMAP-Rule" id="MF_00406"/>
    </source>
</evidence>
<evidence type="ECO:0000305" key="2"/>
<proteinExistence type="inferred from homology"/>
<protein>
    <recommendedName>
        <fullName evidence="1">3-hydroxyacyl-[acyl-carrier-protein] dehydratase FabZ</fullName>
        <ecNumber evidence="1">4.2.1.59</ecNumber>
    </recommendedName>
    <alternativeName>
        <fullName evidence="1">(3R)-hydroxymyristoyl-[acyl-carrier-protein] dehydratase</fullName>
        <shortName evidence="1">(3R)-hydroxymyristoyl-ACP dehydrase</shortName>
    </alternativeName>
    <alternativeName>
        <fullName evidence="1">Beta-hydroxyacyl-ACP dehydratase</fullName>
    </alternativeName>
</protein>